<reference key="1">
    <citation type="journal article" date="2006" name="J. Bacteriol.">
        <title>Complete genome sequence of Yersinia pestis strains Antiqua and Nepal516: evidence of gene reduction in an emerging pathogen.</title>
        <authorList>
            <person name="Chain P.S.G."/>
            <person name="Hu P."/>
            <person name="Malfatti S.A."/>
            <person name="Radnedge L."/>
            <person name="Larimer F."/>
            <person name="Vergez L.M."/>
            <person name="Worsham P."/>
            <person name="Chu M.C."/>
            <person name="Andersen G.L."/>
        </authorList>
    </citation>
    <scope>NUCLEOTIDE SEQUENCE [LARGE SCALE GENOMIC DNA]</scope>
    <source>
        <strain>Nepal516</strain>
    </source>
</reference>
<dbReference type="EC" id="2.4.1.325" evidence="1"/>
<dbReference type="EMBL" id="CP000305">
    <property type="protein sequence ID" value="ABG16439.1"/>
    <property type="molecule type" value="Genomic_DNA"/>
</dbReference>
<dbReference type="RefSeq" id="WP_002211979.1">
    <property type="nucleotide sequence ID" value="NC_008149.1"/>
</dbReference>
<dbReference type="SMR" id="Q1CNJ1"/>
<dbReference type="CAZy" id="GT56">
    <property type="family name" value="Glycosyltransferase Family 56"/>
</dbReference>
<dbReference type="KEGG" id="ypn:YPN_0106"/>
<dbReference type="HOGENOM" id="CLU_066584_0_0_6"/>
<dbReference type="UniPathway" id="UPA00566"/>
<dbReference type="Proteomes" id="UP000008936">
    <property type="component" value="Chromosome"/>
</dbReference>
<dbReference type="GO" id="GO:0005886">
    <property type="term" value="C:plasma membrane"/>
    <property type="evidence" value="ECO:0007669"/>
    <property type="project" value="UniProtKB-SubCell"/>
</dbReference>
<dbReference type="GO" id="GO:0102031">
    <property type="term" value="F:4-acetamido-4,6-dideoxy-D-galactose transferase activity"/>
    <property type="evidence" value="ECO:0007669"/>
    <property type="project" value="UniProtKB-EC"/>
</dbReference>
<dbReference type="GO" id="GO:0008417">
    <property type="term" value="F:fucosyltransferase activity"/>
    <property type="evidence" value="ECO:0007669"/>
    <property type="project" value="InterPro"/>
</dbReference>
<dbReference type="GO" id="GO:0009246">
    <property type="term" value="P:enterobacterial common antigen biosynthetic process"/>
    <property type="evidence" value="ECO:0007669"/>
    <property type="project" value="UniProtKB-UniRule"/>
</dbReference>
<dbReference type="GO" id="GO:0036065">
    <property type="term" value="P:fucosylation"/>
    <property type="evidence" value="ECO:0007669"/>
    <property type="project" value="InterPro"/>
</dbReference>
<dbReference type="HAMAP" id="MF_01002">
    <property type="entry name" value="WecF_RffT"/>
    <property type="match status" value="1"/>
</dbReference>
<dbReference type="InterPro" id="IPR009993">
    <property type="entry name" value="WecF"/>
</dbReference>
<dbReference type="NCBIfam" id="NF002753">
    <property type="entry name" value="PRK02797.1-2"/>
    <property type="match status" value="1"/>
</dbReference>
<dbReference type="Pfam" id="PF07429">
    <property type="entry name" value="Glyco_transf_56"/>
    <property type="match status" value="1"/>
</dbReference>
<feature type="chain" id="PRO_1000062753" description="TDP-N-acetylfucosamine:lipid II N-acetylfucosaminyltransferase">
    <location>
        <begin position="1"/>
        <end position="361"/>
    </location>
</feature>
<proteinExistence type="inferred from homology"/>
<protein>
    <recommendedName>
        <fullName evidence="1">TDP-N-acetylfucosamine:lipid II N-acetylfucosaminyltransferase</fullName>
        <ecNumber evidence="1">2.4.1.325</ecNumber>
    </recommendedName>
    <alternativeName>
        <fullName evidence="1">4-alpha-L-fucosyltransferase</fullName>
    </alternativeName>
    <alternativeName>
        <fullName evidence="1">TDP-Fuc4NAc:lipid II Fuc4NAc transferase</fullName>
        <shortName evidence="1">Fuc4NAc transferase</shortName>
    </alternativeName>
</protein>
<keyword id="KW-0997">Cell inner membrane</keyword>
<keyword id="KW-1003">Cell membrane</keyword>
<keyword id="KW-0328">Glycosyltransferase</keyword>
<keyword id="KW-0472">Membrane</keyword>
<keyword id="KW-0808">Transferase</keyword>
<name>WECF_YERPN</name>
<sequence length="361" mass="41071">MITLTHVLGSDIPHHNLTVLRFFNDVLAKCLPVEQVRHFMVAAKETAPFSSFPQLDINTYSDKKALAEAVIARAQADRSARFFWHGQFNVTLWLALLSGKIKPGQVYWHVWGADLYEDAKSLKFRLFYLLRRIAQGRVGHVFATRGDLIHYQQRHPRVPASLLYFPTRMDPALTAINIDKPLAGPMTILVGNSGDTTNRHIEALKAIHQQFGPDVRVIIPMGYPANNEAYIEQVRQAGLALFSQDNLRILTEQIPFDDYLNILRECDLGYFIFNRQQGIGTLCLLTQFGVPFVLSRKNPFWQDLAEQHIPVFFYGDTLDEPMIREAQRQLAGLDKQAIAFFNPNYIEGWKQALALAAGEHP</sequence>
<comment type="function">
    <text evidence="1">Catalyzes the synthesis of Und-PP-GlcNAc-ManNAcA-Fuc4NAc (Lipid III), the third lipid-linked intermediate involved in ECA synthesis.</text>
</comment>
<comment type="catalytic activity">
    <reaction evidence="1">
        <text>beta-D-ManNAcA-(1-&gt;4)-alpha-D-GlcNAc-di-trans,octa-cis-undecaprenyl diphosphate + dTDP-4-acetamido-4,6-dideoxy-alpha-D-galactose = alpha-D-FucNAc4-(1-&gt;4)-beta-D-ManNAcA-(1-&gt;4)-D-GlcNAc-undecaprenyl diphosphate + dTDP + H(+)</text>
        <dbReference type="Rhea" id="RHEA:28759"/>
        <dbReference type="ChEBI" id="CHEBI:15378"/>
        <dbReference type="ChEBI" id="CHEBI:58369"/>
        <dbReference type="ChEBI" id="CHEBI:61495"/>
        <dbReference type="ChEBI" id="CHEBI:61496"/>
        <dbReference type="ChEBI" id="CHEBI:68493"/>
        <dbReference type="EC" id="2.4.1.325"/>
    </reaction>
</comment>
<comment type="pathway">
    <text evidence="1">Bacterial outer membrane biogenesis; enterobacterial common antigen biosynthesis.</text>
</comment>
<comment type="subcellular location">
    <subcellularLocation>
        <location evidence="1">Cell inner membrane</location>
        <topology evidence="1">Peripheral membrane protein</topology>
    </subcellularLocation>
</comment>
<comment type="similarity">
    <text evidence="1">Belongs to the glycosyltransferase 56 family.</text>
</comment>
<gene>
    <name evidence="1" type="primary">wecF</name>
    <name evidence="1" type="synonym">rffT</name>
    <name type="ordered locus">YPN_0106</name>
</gene>
<evidence type="ECO:0000255" key="1">
    <source>
        <dbReference type="HAMAP-Rule" id="MF_01002"/>
    </source>
</evidence>
<accession>Q1CNJ1</accession>
<organism>
    <name type="scientific">Yersinia pestis bv. Antiqua (strain Nepal516)</name>
    <dbReference type="NCBI Taxonomy" id="377628"/>
    <lineage>
        <taxon>Bacteria</taxon>
        <taxon>Pseudomonadati</taxon>
        <taxon>Pseudomonadota</taxon>
        <taxon>Gammaproteobacteria</taxon>
        <taxon>Enterobacterales</taxon>
        <taxon>Yersiniaceae</taxon>
        <taxon>Yersinia</taxon>
    </lineage>
</organism>